<protein>
    <recommendedName>
        <fullName evidence="1">Holo-[acyl-carrier-protein] synthase</fullName>
        <shortName evidence="1">Holo-ACP synthase</shortName>
        <ecNumber evidence="1">2.7.8.7</ecNumber>
    </recommendedName>
    <alternativeName>
        <fullName evidence="1">4'-phosphopantetheinyl transferase AcpS</fullName>
    </alternativeName>
</protein>
<dbReference type="EC" id="2.7.8.7" evidence="1"/>
<dbReference type="EMBL" id="CP000378">
    <property type="protein sequence ID" value="ABF75568.1"/>
    <property type="molecule type" value="Genomic_DNA"/>
</dbReference>
<dbReference type="SMR" id="Q1BXT7"/>
<dbReference type="HOGENOM" id="CLU_089696_3_1_4"/>
<dbReference type="GO" id="GO:0005737">
    <property type="term" value="C:cytoplasm"/>
    <property type="evidence" value="ECO:0007669"/>
    <property type="project" value="UniProtKB-SubCell"/>
</dbReference>
<dbReference type="GO" id="GO:0008897">
    <property type="term" value="F:holo-[acyl-carrier-protein] synthase activity"/>
    <property type="evidence" value="ECO:0007669"/>
    <property type="project" value="UniProtKB-UniRule"/>
</dbReference>
<dbReference type="GO" id="GO:0000287">
    <property type="term" value="F:magnesium ion binding"/>
    <property type="evidence" value="ECO:0007669"/>
    <property type="project" value="UniProtKB-UniRule"/>
</dbReference>
<dbReference type="GO" id="GO:0006633">
    <property type="term" value="P:fatty acid biosynthetic process"/>
    <property type="evidence" value="ECO:0007669"/>
    <property type="project" value="UniProtKB-UniRule"/>
</dbReference>
<dbReference type="Gene3D" id="3.90.470.20">
    <property type="entry name" value="4'-phosphopantetheinyl transferase domain"/>
    <property type="match status" value="1"/>
</dbReference>
<dbReference type="HAMAP" id="MF_00101">
    <property type="entry name" value="AcpS"/>
    <property type="match status" value="1"/>
</dbReference>
<dbReference type="InterPro" id="IPR008278">
    <property type="entry name" value="4-PPantetheinyl_Trfase_dom"/>
</dbReference>
<dbReference type="InterPro" id="IPR037143">
    <property type="entry name" value="4-PPantetheinyl_Trfase_dom_sf"/>
</dbReference>
<dbReference type="InterPro" id="IPR002582">
    <property type="entry name" value="ACPS"/>
</dbReference>
<dbReference type="InterPro" id="IPR004568">
    <property type="entry name" value="Ppantetheine-prot_Trfase_dom"/>
</dbReference>
<dbReference type="NCBIfam" id="TIGR00516">
    <property type="entry name" value="acpS"/>
    <property type="match status" value="1"/>
</dbReference>
<dbReference type="NCBIfam" id="TIGR00556">
    <property type="entry name" value="pantethn_trn"/>
    <property type="match status" value="1"/>
</dbReference>
<dbReference type="Pfam" id="PF01648">
    <property type="entry name" value="ACPS"/>
    <property type="match status" value="1"/>
</dbReference>
<dbReference type="SUPFAM" id="SSF56214">
    <property type="entry name" value="4'-phosphopantetheinyl transferase"/>
    <property type="match status" value="1"/>
</dbReference>
<sequence>MAIYGIGTDIAQVSRVAAVLERTGGRFAEKVLGPDELRVFHARRARSEARGIAFLATRFSAKEAFSKAIGLGMHWPMTWRALQTLNHPSGEPYVVASGELADWLAARGITARVTVSDERDYAVSFVVAETDAETDAAPAPVPVSRTSS</sequence>
<feature type="chain" id="PRO_1000008394" description="Holo-[acyl-carrier-protein] synthase">
    <location>
        <begin position="1"/>
        <end position="148"/>
    </location>
</feature>
<feature type="binding site" evidence="1">
    <location>
        <position position="9"/>
    </location>
    <ligand>
        <name>Mg(2+)</name>
        <dbReference type="ChEBI" id="CHEBI:18420"/>
    </ligand>
</feature>
<feature type="binding site" evidence="1">
    <location>
        <position position="63"/>
    </location>
    <ligand>
        <name>Mg(2+)</name>
        <dbReference type="ChEBI" id="CHEBI:18420"/>
    </ligand>
</feature>
<organism>
    <name type="scientific">Burkholderia orbicola (strain AU 1054)</name>
    <dbReference type="NCBI Taxonomy" id="331271"/>
    <lineage>
        <taxon>Bacteria</taxon>
        <taxon>Pseudomonadati</taxon>
        <taxon>Pseudomonadota</taxon>
        <taxon>Betaproteobacteria</taxon>
        <taxon>Burkholderiales</taxon>
        <taxon>Burkholderiaceae</taxon>
        <taxon>Burkholderia</taxon>
        <taxon>Burkholderia cepacia complex</taxon>
        <taxon>Burkholderia orbicola</taxon>
    </lineage>
</organism>
<accession>Q1BXT7</accession>
<name>ACPS_BURO1</name>
<gene>
    <name evidence="1" type="primary">acpS</name>
    <name type="ordered locus">Bcen_0658</name>
</gene>
<proteinExistence type="inferred from homology"/>
<keyword id="KW-0963">Cytoplasm</keyword>
<keyword id="KW-0275">Fatty acid biosynthesis</keyword>
<keyword id="KW-0276">Fatty acid metabolism</keyword>
<keyword id="KW-0444">Lipid biosynthesis</keyword>
<keyword id="KW-0443">Lipid metabolism</keyword>
<keyword id="KW-0460">Magnesium</keyword>
<keyword id="KW-0479">Metal-binding</keyword>
<keyword id="KW-0808">Transferase</keyword>
<evidence type="ECO:0000255" key="1">
    <source>
        <dbReference type="HAMAP-Rule" id="MF_00101"/>
    </source>
</evidence>
<comment type="function">
    <text evidence="1">Transfers the 4'-phosphopantetheine moiety from coenzyme A to a Ser of acyl-carrier-protein.</text>
</comment>
<comment type="catalytic activity">
    <reaction evidence="1">
        <text>apo-[ACP] + CoA = holo-[ACP] + adenosine 3',5'-bisphosphate + H(+)</text>
        <dbReference type="Rhea" id="RHEA:12068"/>
        <dbReference type="Rhea" id="RHEA-COMP:9685"/>
        <dbReference type="Rhea" id="RHEA-COMP:9690"/>
        <dbReference type="ChEBI" id="CHEBI:15378"/>
        <dbReference type="ChEBI" id="CHEBI:29999"/>
        <dbReference type="ChEBI" id="CHEBI:57287"/>
        <dbReference type="ChEBI" id="CHEBI:58343"/>
        <dbReference type="ChEBI" id="CHEBI:64479"/>
        <dbReference type="EC" id="2.7.8.7"/>
    </reaction>
</comment>
<comment type="cofactor">
    <cofactor evidence="1">
        <name>Mg(2+)</name>
        <dbReference type="ChEBI" id="CHEBI:18420"/>
    </cofactor>
</comment>
<comment type="subcellular location">
    <subcellularLocation>
        <location evidence="1">Cytoplasm</location>
    </subcellularLocation>
</comment>
<comment type="similarity">
    <text evidence="1">Belongs to the P-Pant transferase superfamily. AcpS family.</text>
</comment>
<reference key="1">
    <citation type="submission" date="2006-05" db="EMBL/GenBank/DDBJ databases">
        <title>Complete sequence of chromosome 1 of Burkholderia cenocepacia AU 1054.</title>
        <authorList>
            <consortium name="US DOE Joint Genome Institute"/>
            <person name="Copeland A."/>
            <person name="Lucas S."/>
            <person name="Lapidus A."/>
            <person name="Barry K."/>
            <person name="Detter J.C."/>
            <person name="Glavina del Rio T."/>
            <person name="Hammon N."/>
            <person name="Israni S."/>
            <person name="Dalin E."/>
            <person name="Tice H."/>
            <person name="Pitluck S."/>
            <person name="Chain P."/>
            <person name="Malfatti S."/>
            <person name="Shin M."/>
            <person name="Vergez L."/>
            <person name="Schmutz J."/>
            <person name="Larimer F."/>
            <person name="Land M."/>
            <person name="Hauser L."/>
            <person name="Kyrpides N."/>
            <person name="Lykidis A."/>
            <person name="LiPuma J.J."/>
            <person name="Konstantinidis K."/>
            <person name="Tiedje J.M."/>
            <person name="Richardson P."/>
        </authorList>
    </citation>
    <scope>NUCLEOTIDE SEQUENCE [LARGE SCALE GENOMIC DNA]</scope>
    <source>
        <strain>AU 1054</strain>
    </source>
</reference>